<keyword id="KW-0002">3D-structure</keyword>
<keyword id="KW-0963">Cytoplasm</keyword>
<keyword id="KW-0256">Endoplasmic reticulum</keyword>
<keyword id="KW-0931">ER-Golgi transport</keyword>
<keyword id="KW-0333">Golgi apparatus</keyword>
<keyword id="KW-0342">GTP-binding</keyword>
<keyword id="KW-0378">Hydrolase</keyword>
<keyword id="KW-0458">Lysosome</keyword>
<keyword id="KW-0460">Magnesium</keyword>
<keyword id="KW-0472">Membrane</keyword>
<keyword id="KW-0479">Metal-binding</keyword>
<keyword id="KW-0547">Nucleotide-binding</keyword>
<keyword id="KW-0597">Phosphoprotein</keyword>
<keyword id="KW-0653">Protein transport</keyword>
<keyword id="KW-0813">Transport</keyword>
<feature type="chain" id="PRO_0000206260" description="Small COPII coat GTPase SAR1B">
    <location>
        <begin position="1"/>
        <end position="198"/>
    </location>
</feature>
<feature type="region of interest" description="Mediates recruitment to ER membranes" evidence="3">
    <location>
        <begin position="15"/>
        <end position="19"/>
    </location>
</feature>
<feature type="short sequence motif" description="STAR; SAR1-N-terminal activation recruitment. Required for the activation by PREB and subsequent recruitment to ER membrane" evidence="3">
    <location>
        <begin position="3"/>
        <end position="5"/>
    </location>
</feature>
<feature type="binding site" evidence="3 8">
    <location>
        <position position="34"/>
    </location>
    <ligand>
        <name>Mg(2+)</name>
        <dbReference type="ChEBI" id="CHEBI:18420"/>
    </ligand>
</feature>
<feature type="binding site" evidence="3 8">
    <location>
        <position position="35"/>
    </location>
    <ligand>
        <name>GDP</name>
        <dbReference type="ChEBI" id="CHEBI:58189"/>
    </ligand>
</feature>
<feature type="binding site" evidence="1">
    <location>
        <position position="35"/>
    </location>
    <ligand>
        <name>GTP</name>
        <dbReference type="ChEBI" id="CHEBI:37565"/>
    </ligand>
</feature>
<feature type="binding site" evidence="3 8">
    <location>
        <position position="36"/>
    </location>
    <ligand>
        <name>GDP</name>
        <dbReference type="ChEBI" id="CHEBI:58189"/>
    </ligand>
</feature>
<feature type="binding site" evidence="3 8">
    <location>
        <position position="37"/>
    </location>
    <ligand>
        <name>GDP</name>
        <dbReference type="ChEBI" id="CHEBI:58189"/>
    </ligand>
</feature>
<feature type="binding site" evidence="1">
    <location>
        <position position="37"/>
    </location>
    <ligand>
        <name>GTP</name>
        <dbReference type="ChEBI" id="CHEBI:37565"/>
    </ligand>
</feature>
<feature type="binding site" evidence="3 8">
    <location>
        <position position="38"/>
    </location>
    <ligand>
        <name>GDP</name>
        <dbReference type="ChEBI" id="CHEBI:58189"/>
    </ligand>
</feature>
<feature type="binding site" evidence="1">
    <location>
        <position position="38"/>
    </location>
    <ligand>
        <name>GTP</name>
        <dbReference type="ChEBI" id="CHEBI:37565"/>
    </ligand>
</feature>
<feature type="binding site" evidence="3 8">
    <location>
        <position position="39"/>
    </location>
    <ligand>
        <name>GDP</name>
        <dbReference type="ChEBI" id="CHEBI:58189"/>
    </ligand>
</feature>
<feature type="binding site" evidence="1">
    <location>
        <position position="39"/>
    </location>
    <ligand>
        <name>GTP</name>
        <dbReference type="ChEBI" id="CHEBI:37565"/>
    </ligand>
</feature>
<feature type="binding site" evidence="3 8">
    <location>
        <position position="40"/>
    </location>
    <ligand>
        <name>GDP</name>
        <dbReference type="ChEBI" id="CHEBI:58189"/>
    </ligand>
</feature>
<feature type="binding site" evidence="1">
    <location>
        <position position="40"/>
    </location>
    <ligand>
        <name>GTP</name>
        <dbReference type="ChEBI" id="CHEBI:37565"/>
    </ligand>
</feature>
<feature type="binding site" evidence="1">
    <location>
        <position position="58"/>
    </location>
    <ligand>
        <name>GDP</name>
        <dbReference type="ChEBI" id="CHEBI:58189"/>
    </ligand>
</feature>
<feature type="binding site" evidence="3 8">
    <location>
        <position position="75"/>
    </location>
    <ligand>
        <name>Mg(2+)</name>
        <dbReference type="ChEBI" id="CHEBI:18420"/>
    </ligand>
</feature>
<feature type="binding site" evidence="3 8">
    <location>
        <position position="134"/>
    </location>
    <ligand>
        <name>GDP</name>
        <dbReference type="ChEBI" id="CHEBI:58189"/>
    </ligand>
</feature>
<feature type="binding site" evidence="1">
    <location>
        <position position="134"/>
    </location>
    <ligand>
        <name>GTP</name>
        <dbReference type="ChEBI" id="CHEBI:37565"/>
    </ligand>
</feature>
<feature type="binding site" evidence="3 8">
    <location>
        <position position="135"/>
    </location>
    <ligand>
        <name>GDP</name>
        <dbReference type="ChEBI" id="CHEBI:58189"/>
    </ligand>
</feature>
<feature type="binding site" evidence="1">
    <location>
        <position position="135"/>
    </location>
    <ligand>
        <name>GTP</name>
        <dbReference type="ChEBI" id="CHEBI:37565"/>
    </ligand>
</feature>
<feature type="binding site" evidence="3 8">
    <location>
        <position position="137"/>
    </location>
    <ligand>
        <name>GDP</name>
        <dbReference type="ChEBI" id="CHEBI:58189"/>
    </ligand>
</feature>
<feature type="binding site" evidence="1">
    <location>
        <position position="137"/>
    </location>
    <ligand>
        <name>GTP</name>
        <dbReference type="ChEBI" id="CHEBI:37565"/>
    </ligand>
</feature>
<feature type="binding site" evidence="3 8">
    <location>
        <position position="180"/>
    </location>
    <ligand>
        <name>GDP</name>
        <dbReference type="ChEBI" id="CHEBI:58189"/>
    </ligand>
</feature>
<feature type="binding site" evidence="1">
    <location>
        <position position="180"/>
    </location>
    <ligand>
        <name>GTP</name>
        <dbReference type="ChEBI" id="CHEBI:37565"/>
    </ligand>
</feature>
<feature type="binding site" evidence="3 8">
    <location>
        <position position="181"/>
    </location>
    <ligand>
        <name>GDP</name>
        <dbReference type="ChEBI" id="CHEBI:58189"/>
    </ligand>
</feature>
<feature type="binding site" evidence="1">
    <location>
        <position position="181"/>
    </location>
    <ligand>
        <name>GTP</name>
        <dbReference type="ChEBI" id="CHEBI:37565"/>
    </ligand>
</feature>
<feature type="modified residue" description="Phosphoserine" evidence="1">
    <location>
        <position position="164"/>
    </location>
</feature>
<feature type="mutagenesis site" description="Loss of activation by PREB. Decreases recruitment to the endoplasmic reticulum." evidence="3">
    <original>FIF</original>
    <variation>AAA</variation>
    <location>
        <begin position="3"/>
        <end position="5"/>
    </location>
</feature>
<feature type="mutagenesis site" description="No effect on activation by PREB." evidence="3">
    <original>F</original>
    <variation>A</variation>
    <location>
        <position position="5"/>
    </location>
</feature>
<feature type="mutagenesis site" description="Loss of activation by PREB. Decreases recruitment to the endoplasmic reticulum." evidence="3">
    <original>F</original>
    <variation>D</variation>
    <location>
        <position position="5"/>
    </location>
</feature>
<feature type="mutagenesis site" description="Blocks export of proteins from the ER to the Golgi. No effect on nucleotide binding. Abolishes localization to the endoplasmic reticulum." evidence="3">
    <original>VLQFL</original>
    <variation>AAAA</variation>
    <location>
        <begin position="15"/>
        <end position="19"/>
    </location>
</feature>
<feature type="mutagenesis site" description="Lowers affinity for GTP, but not for GDP. Inhibits export of proteins from the ER to the Golgi." evidence="4">
    <original>T</original>
    <variation>N</variation>
    <location>
        <position position="39"/>
    </location>
</feature>
<feature type="mutagenesis site" description="Blocks export of proteins from the ER to the Golgi." evidence="3">
    <original>T</original>
    <variation>A</variation>
    <location>
        <position position="158"/>
    </location>
</feature>
<feature type="helix" evidence="9">
    <location>
        <begin position="14"/>
        <end position="18"/>
    </location>
</feature>
<feature type="strand" evidence="9">
    <location>
        <begin position="26"/>
        <end position="33"/>
    </location>
</feature>
<feature type="helix" evidence="9">
    <location>
        <begin position="38"/>
        <end position="45"/>
    </location>
</feature>
<feature type="strand" evidence="9">
    <location>
        <begin position="62"/>
        <end position="66"/>
    </location>
</feature>
<feature type="strand" evidence="9">
    <location>
        <begin position="69"/>
        <end position="76"/>
    </location>
</feature>
<feature type="strand" evidence="10">
    <location>
        <begin position="79"/>
        <end position="81"/>
    </location>
</feature>
<feature type="helix" evidence="9">
    <location>
        <begin position="85"/>
        <end position="92"/>
    </location>
</feature>
<feature type="strand" evidence="9">
    <location>
        <begin position="94"/>
        <end position="101"/>
    </location>
</feature>
<feature type="helix" evidence="9">
    <location>
        <begin position="105"/>
        <end position="107"/>
    </location>
</feature>
<feature type="helix" evidence="9">
    <location>
        <begin position="108"/>
        <end position="119"/>
    </location>
</feature>
<feature type="helix" evidence="9">
    <location>
        <begin position="122"/>
        <end position="124"/>
    </location>
</feature>
<feature type="strand" evidence="9">
    <location>
        <begin position="129"/>
        <end position="134"/>
    </location>
</feature>
<feature type="helix" evidence="9">
    <location>
        <begin position="144"/>
        <end position="151"/>
    </location>
</feature>
<feature type="turn" evidence="9">
    <location>
        <begin position="154"/>
        <end position="156"/>
    </location>
</feature>
<feature type="turn" evidence="9">
    <location>
        <begin position="165"/>
        <end position="167"/>
    </location>
</feature>
<feature type="strand" evidence="9">
    <location>
        <begin position="173"/>
        <end position="177"/>
    </location>
</feature>
<feature type="turn" evidence="9">
    <location>
        <begin position="180"/>
        <end position="183"/>
    </location>
</feature>
<feature type="helix" evidence="9">
    <location>
        <begin position="186"/>
        <end position="194"/>
    </location>
</feature>
<reference key="1">
    <citation type="journal article" date="1994" name="J. Cell Biol.">
        <title>Sar1 promotes vesicle budding from the endoplasmic reticulum but not Golgi compartments.</title>
        <authorList>
            <person name="Kuge O."/>
            <person name="Dascher C."/>
            <person name="Orci L."/>
            <person name="Rowe T."/>
            <person name="Amherdt M."/>
            <person name="Plutner H."/>
            <person name="Ravazzola M."/>
            <person name="Tanigawa G."/>
            <person name="Rothman J.E."/>
            <person name="Balch W.E."/>
        </authorList>
    </citation>
    <scope>NUCLEOTIDE SEQUENCE</scope>
    <scope>FUNCTION</scope>
    <scope>MUTAGENESIS OF THR-39</scope>
    <scope>SUBCELLULAR LOCATION</scope>
    <source>
        <tissue>Ovary</tissue>
    </source>
</reference>
<reference key="2">
    <citation type="journal article" date="2001" name="J. Cell Biol.">
        <title>The Sar1 GTPase coordinates biosynthetic cargo selection with endoplasmic reticulum export site assembly.</title>
        <authorList>
            <person name="Aridor M."/>
            <person name="Fish K.N."/>
            <person name="Bannykh S."/>
            <person name="Weissman J."/>
            <person name="Roberts T.H."/>
            <person name="Lippincott-Schwartz J."/>
            <person name="Balch W.E."/>
        </authorList>
    </citation>
    <scope>FUNCTION</scope>
</reference>
<reference key="3">
    <citation type="journal article" date="2002" name="Acta Crystallogr. D">
        <title>Protein engineering for crystallization of the GTPase Sar1 that regulates ER vesicle budding.</title>
        <authorList>
            <person name="Huang M."/>
            <person name="Weissman J.T."/>
            <person name="Wang C."/>
            <person name="Balch W.E."/>
            <person name="Wilson I.A."/>
        </authorList>
    </citation>
    <scope>CRYSTALLIZATION</scope>
</reference>
<reference evidence="8" key="4">
    <citation type="journal article" date="2001" name="J. Cell Biol.">
        <title>Crystal structure of Sar1-GDP at 1.7 A resolution and the role of the NH2 terminus in ER export.</title>
        <authorList>
            <person name="Huang M."/>
            <person name="Weissman J.T."/>
            <person name="Beraud-Dufour S."/>
            <person name="Luan P."/>
            <person name="Wang C."/>
            <person name="Chen W."/>
            <person name="Aridor M."/>
            <person name="Wilson I.A."/>
            <person name="Balch W.E."/>
        </authorList>
    </citation>
    <scope>X-RAY CRYSTALLOGRAPHY (1.7 ANGSTROMS) OF 10-198 IN COMPLEX WITH GDP</scope>
    <scope>FUNCTION</scope>
    <scope>CATALYTIC ACTIVITY</scope>
    <scope>SUBUNIT</scope>
    <scope>INTERACTION WITH PREB</scope>
    <scope>ACTIVITY REGULATION</scope>
    <scope>SUBCELLULAR LOCATION</scope>
    <scope>MOTIF</scope>
    <scope>MUTAGENESIS OF 3-PHE--PHE-5; PHE-5; 15-VAL--LEU-19 AND THR-158</scope>
</reference>
<gene>
    <name evidence="1" type="primary">SAR1B</name>
    <name evidence="5" type="synonym">SAR1</name>
    <name type="synonym">SARA2</name>
</gene>
<proteinExistence type="evidence at protein level"/>
<evidence type="ECO:0000250" key="1">
    <source>
        <dbReference type="UniProtKB" id="Q9Y6B6"/>
    </source>
</evidence>
<evidence type="ECO:0000269" key="2">
    <source>
    </source>
</evidence>
<evidence type="ECO:0000269" key="3">
    <source>
    </source>
</evidence>
<evidence type="ECO:0000269" key="4">
    <source>
    </source>
</evidence>
<evidence type="ECO:0000303" key="5">
    <source>
    </source>
</evidence>
<evidence type="ECO:0000305" key="6"/>
<evidence type="ECO:0000305" key="7">
    <source>
    </source>
</evidence>
<evidence type="ECO:0007744" key="8">
    <source>
        <dbReference type="PDB" id="1F6B"/>
    </source>
</evidence>
<evidence type="ECO:0007829" key="9">
    <source>
        <dbReference type="PDB" id="1F6B"/>
    </source>
</evidence>
<evidence type="ECO:0007829" key="10">
    <source>
        <dbReference type="PDB" id="2FA9"/>
    </source>
</evidence>
<comment type="function">
    <text evidence="1 2 3 4">Small GTPase that cycles between an active GTP-bound and an inactive GDP-bound state and mainly functions in vesicle-mediated endoplasmic reticulum (ER) to Golgi transport. The active GTP-bound form inserts into the endoplasmic reticulum membrane where it recruits the remainder of the coat protein complex II/COPII. The coat protein complex II assembling and polymerizing on endoplasmic reticulum membrane is responsible for both the sorting of cargos and the deformation and budding of membranes into vesicles destined to the Golgi (PubMed:11149932, PubMed:11739406, PubMed:8138575). In contrast to SAR1A, SAR1B specifically interacts with the cargo receptor SURF4 to mediate the transport of lipid-carrying lipoproteins including APOB and APOA1 from the endoplasmic reticulum to the Golgi and thereby, indirectly regulates lipid homeostasis. In addition to its role in vesicle trafficking, can also function as a leucine sensor regulating TORC1 signaling and more indirectly cellular metabolism, growth and survival. In absence of leucine, interacts with the GATOR2 complex via MIOS and inhibits TORC1 signaling. The binding of leucine abrogates the interaction with GATOR2 and the inhibition of the TORC1 signaling. This function is completely independent of the GTPase activity of SAR1B (By similarity).</text>
</comment>
<comment type="catalytic activity">
    <reaction evidence="3">
        <text>GTP + H2O = GDP + phosphate + H(+)</text>
        <dbReference type="Rhea" id="RHEA:19669"/>
        <dbReference type="ChEBI" id="CHEBI:15377"/>
        <dbReference type="ChEBI" id="CHEBI:15378"/>
        <dbReference type="ChEBI" id="CHEBI:37565"/>
        <dbReference type="ChEBI" id="CHEBI:43474"/>
        <dbReference type="ChEBI" id="CHEBI:58189"/>
        <dbReference type="EC" id="3.6.5.2"/>
    </reaction>
    <physiologicalReaction direction="left-to-right" evidence="3">
        <dbReference type="Rhea" id="RHEA:19670"/>
    </physiologicalReaction>
</comment>
<comment type="activity regulation">
    <text evidence="3">Small GTPases activation is mediated by guanine exchange factors (GEF), while inactivation through hydrolysis of the bound GTP is stimulated by a GTPase activating protein (GAP) (PubMed:11739406). Activated by the guanine nucleotide exchange factor PREB/SEC12 that facilitates the loading of SAR1B with GTP (PubMed:11739406). GTP hydrolysis is stimulated by SEC23/24 (PubMed:11739406).</text>
</comment>
<comment type="subunit">
    <text evidence="1 3">Homodimer; upon association with membrane (PubMed:11739406). Part of the coat protein complex II/COPII, composed of SEC23/24 and SEC13/31 heterodimers, that it helps recruit and assemble on endoplasmic reticulum (ER) membranes at ER exit site. Interacts with PREB; PREB acts as a guanine nucleotide exchange factor facilitating the activation of SAR1B by loading it with GTP (PubMed:11739406). Interacts with SURF4; recruits the cargo receptor SURF4 and its lipoprotein cargos to COPII-coated ER to Golgi transport vesicles. Interacts with MIOS; the interaction is direct, disrupted by the binding of leucine and mediates the interaction of SAR1B with the GATOR2 complex to negatively regulate the TORC1 signaling upon leucine deprivation (By similarity).</text>
</comment>
<comment type="subcellular location">
    <subcellularLocation>
        <location evidence="4">Endoplasmic reticulum membrane</location>
        <topology evidence="4">Peripheral membrane protein</topology>
    </subcellularLocation>
    <subcellularLocation>
        <location evidence="4">Golgi apparatus</location>
        <location evidence="4">Golgi stack membrane</location>
        <topology evidence="4">Peripheral membrane protein</topology>
    </subcellularLocation>
    <subcellularLocation>
        <location evidence="1">Cytoplasm</location>
        <location evidence="1">Cytosol</location>
    </subcellularLocation>
    <subcellularLocation>
        <location evidence="1">Lysosome membrane</location>
    </subcellularLocation>
    <text evidence="1 3 4">Active at endoplasmic reticulum exit sites (ERES) where it inserts into the membrane and recruits the remainder of the coat protein complex II/COPII (PubMed:11739406, PubMed:8138575). Upon leucine deprivation, associates with lysosomal membranes to repress TORC1 signaling (By similarity).</text>
</comment>
<comment type="similarity">
    <text evidence="6">Belongs to the small GTPase superfamily. SAR1 family.</text>
</comment>
<accession>Q9QVY3</accession>
<dbReference type="EC" id="3.6.5.2" evidence="3"/>
<dbReference type="RefSeq" id="XP_003498539.1">
    <property type="nucleotide sequence ID" value="XM_003498491.3"/>
</dbReference>
<dbReference type="RefSeq" id="XP_007611226.1">
    <property type="nucleotide sequence ID" value="XM_007613036.2"/>
</dbReference>
<dbReference type="RefSeq" id="XP_007611227.1">
    <property type="nucleotide sequence ID" value="XM_007613037.1"/>
</dbReference>
<dbReference type="RefSeq" id="XP_007626894.1">
    <property type="nucleotide sequence ID" value="XM_007628704.2"/>
</dbReference>
<dbReference type="PDB" id="1F6B">
    <property type="method" value="X-ray"/>
    <property type="resolution" value="1.70 A"/>
    <property type="chains" value="A/B=1-198"/>
</dbReference>
<dbReference type="PDB" id="2FA9">
    <property type="method" value="X-ray"/>
    <property type="resolution" value="2.50 A"/>
    <property type="chains" value="A/B=10-198"/>
</dbReference>
<dbReference type="PDB" id="2FMX">
    <property type="method" value="X-ray"/>
    <property type="resolution" value="1.82 A"/>
    <property type="chains" value="A/B=10-198"/>
</dbReference>
<dbReference type="PDBsum" id="1F6B"/>
<dbReference type="PDBsum" id="2FA9"/>
<dbReference type="PDBsum" id="2FMX"/>
<dbReference type="SMR" id="Q9QVY3"/>
<dbReference type="CORUM" id="Q9QVY3"/>
<dbReference type="PaxDb" id="10029-XP_007611226.1"/>
<dbReference type="Ensembl" id="ENSCGRT00001020069.1">
    <property type="protein sequence ID" value="ENSCGRP00001015826.1"/>
    <property type="gene ID" value="ENSCGRG00001016339.1"/>
</dbReference>
<dbReference type="GeneID" id="100758826"/>
<dbReference type="CTD" id="51128"/>
<dbReference type="eggNOG" id="KOG0077">
    <property type="taxonomic scope" value="Eukaryota"/>
</dbReference>
<dbReference type="GeneTree" id="ENSGT00940000160154"/>
<dbReference type="OMA" id="DCADYER"/>
<dbReference type="OrthoDB" id="15478at2759"/>
<dbReference type="EvolutionaryTrace" id="Q9QVY3"/>
<dbReference type="Proteomes" id="UP000694386">
    <property type="component" value="Unplaced"/>
</dbReference>
<dbReference type="Proteomes" id="UP001108280">
    <property type="component" value="Unplaced"/>
</dbReference>
<dbReference type="GO" id="GO:0030127">
    <property type="term" value="C:COPII vesicle coat"/>
    <property type="evidence" value="ECO:0000250"/>
    <property type="project" value="UniProtKB"/>
</dbReference>
<dbReference type="GO" id="GO:0005829">
    <property type="term" value="C:cytosol"/>
    <property type="evidence" value="ECO:0007669"/>
    <property type="project" value="UniProtKB-SubCell"/>
</dbReference>
<dbReference type="GO" id="GO:0070971">
    <property type="term" value="C:endoplasmic reticulum exit site"/>
    <property type="evidence" value="ECO:0000250"/>
    <property type="project" value="UniProtKB"/>
</dbReference>
<dbReference type="GO" id="GO:0005789">
    <property type="term" value="C:endoplasmic reticulum membrane"/>
    <property type="evidence" value="ECO:0000304"/>
    <property type="project" value="Reactome"/>
</dbReference>
<dbReference type="GO" id="GO:0032580">
    <property type="term" value="C:Golgi cisterna membrane"/>
    <property type="evidence" value="ECO:0007669"/>
    <property type="project" value="UniProtKB-SubCell"/>
</dbReference>
<dbReference type="GO" id="GO:0005765">
    <property type="term" value="C:lysosomal membrane"/>
    <property type="evidence" value="ECO:0007669"/>
    <property type="project" value="UniProtKB-SubCell"/>
</dbReference>
<dbReference type="GO" id="GO:0140785">
    <property type="term" value="F:amino acid sensor activity"/>
    <property type="evidence" value="ECO:0007669"/>
    <property type="project" value="Ensembl"/>
</dbReference>
<dbReference type="GO" id="GO:0003925">
    <property type="term" value="F:G protein activity"/>
    <property type="evidence" value="ECO:0000250"/>
    <property type="project" value="UniProtKB"/>
</dbReference>
<dbReference type="GO" id="GO:0005525">
    <property type="term" value="F:GTP binding"/>
    <property type="evidence" value="ECO:0007669"/>
    <property type="project" value="UniProtKB-KW"/>
</dbReference>
<dbReference type="GO" id="GO:0046872">
    <property type="term" value="F:metal ion binding"/>
    <property type="evidence" value="ECO:0007669"/>
    <property type="project" value="UniProtKB-KW"/>
</dbReference>
<dbReference type="GO" id="GO:1990253">
    <property type="term" value="P:cellular response to leucine starvation"/>
    <property type="evidence" value="ECO:0007669"/>
    <property type="project" value="Ensembl"/>
</dbReference>
<dbReference type="GO" id="GO:0048208">
    <property type="term" value="P:COPII vesicle coating"/>
    <property type="evidence" value="ECO:0000250"/>
    <property type="project" value="UniProtKB"/>
</dbReference>
<dbReference type="GO" id="GO:0090110">
    <property type="term" value="P:COPII-coated vesicle cargo loading"/>
    <property type="evidence" value="ECO:0000250"/>
    <property type="project" value="UniProtKB"/>
</dbReference>
<dbReference type="GO" id="GO:0006888">
    <property type="term" value="P:endoplasmic reticulum to Golgi vesicle-mediated transport"/>
    <property type="evidence" value="ECO:0000250"/>
    <property type="project" value="UniProtKB"/>
</dbReference>
<dbReference type="GO" id="GO:0006886">
    <property type="term" value="P:intracellular protein transport"/>
    <property type="evidence" value="ECO:0007669"/>
    <property type="project" value="InterPro"/>
</dbReference>
<dbReference type="GO" id="GO:0140353">
    <property type="term" value="P:lipid export from cell"/>
    <property type="evidence" value="ECO:0007669"/>
    <property type="project" value="Ensembl"/>
</dbReference>
<dbReference type="GO" id="GO:0055088">
    <property type="term" value="P:lipid homeostasis"/>
    <property type="evidence" value="ECO:0000250"/>
    <property type="project" value="UniProtKB"/>
</dbReference>
<dbReference type="GO" id="GO:0042953">
    <property type="term" value="P:lipoprotein transport"/>
    <property type="evidence" value="ECO:0000250"/>
    <property type="project" value="UniProtKB"/>
</dbReference>
<dbReference type="GO" id="GO:1904262">
    <property type="term" value="P:negative regulation of TORC1 signaling"/>
    <property type="evidence" value="ECO:0007669"/>
    <property type="project" value="Ensembl"/>
</dbReference>
<dbReference type="GO" id="GO:0032368">
    <property type="term" value="P:regulation of lipid transport"/>
    <property type="evidence" value="ECO:0000250"/>
    <property type="project" value="UniProtKB"/>
</dbReference>
<dbReference type="CDD" id="cd00879">
    <property type="entry name" value="Sar1"/>
    <property type="match status" value="1"/>
</dbReference>
<dbReference type="FunFam" id="3.40.50.300:FF:000161">
    <property type="entry name" value="Small COPII coat GTPase"/>
    <property type="match status" value="1"/>
</dbReference>
<dbReference type="Gene3D" id="3.40.50.300">
    <property type="entry name" value="P-loop containing nucleotide triphosphate hydrolases"/>
    <property type="match status" value="1"/>
</dbReference>
<dbReference type="InterPro" id="IPR027417">
    <property type="entry name" value="P-loop_NTPase"/>
</dbReference>
<dbReference type="InterPro" id="IPR005225">
    <property type="entry name" value="Small_GTP-bd"/>
</dbReference>
<dbReference type="InterPro" id="IPR006689">
    <property type="entry name" value="Small_GTPase_ARF/SAR"/>
</dbReference>
<dbReference type="InterPro" id="IPR006687">
    <property type="entry name" value="Small_GTPase_SAR1"/>
</dbReference>
<dbReference type="NCBIfam" id="TIGR00231">
    <property type="entry name" value="small_GTP"/>
    <property type="match status" value="1"/>
</dbReference>
<dbReference type="PANTHER" id="PTHR45684">
    <property type="entry name" value="RE74312P"/>
    <property type="match status" value="1"/>
</dbReference>
<dbReference type="Pfam" id="PF00025">
    <property type="entry name" value="Arf"/>
    <property type="match status" value="1"/>
</dbReference>
<dbReference type="PRINTS" id="PR00328">
    <property type="entry name" value="SAR1GTPBP"/>
</dbReference>
<dbReference type="SMART" id="SM00177">
    <property type="entry name" value="ARF"/>
    <property type="match status" value="1"/>
</dbReference>
<dbReference type="SMART" id="SM00178">
    <property type="entry name" value="SAR"/>
    <property type="match status" value="1"/>
</dbReference>
<dbReference type="SUPFAM" id="SSF52540">
    <property type="entry name" value="P-loop containing nucleoside triphosphate hydrolases"/>
    <property type="match status" value="1"/>
</dbReference>
<dbReference type="PROSITE" id="PS51422">
    <property type="entry name" value="SAR1"/>
    <property type="match status" value="1"/>
</dbReference>
<sequence>MSFIFDWIYSGFSSVLQFLGLYKKTGKLVFLGLDNAGKTTLLHMLKDDRLGQHVPTLHPTSEELTIAGMTFTTFDLGGHIQARRVWKNYLPAINGIVFLVDCADHERLLESKEELDSLMTDETIANVPILILGNKIDRPEAISEERLREMFGLYGQTTGKGSVSLKELNARPLEVFMCSVLKRQGYGEGFRWMAQYID</sequence>
<protein>
    <recommendedName>
        <fullName evidence="7">Small COPII coat GTPase SAR1B</fullName>
        <shortName evidence="5">Sar1</shortName>
        <ecNumber evidence="3">3.6.5.2</ecNumber>
    </recommendedName>
</protein>
<organism>
    <name type="scientific">Cricetulus griseus</name>
    <name type="common">Chinese hamster</name>
    <name type="synonym">Cricetulus barabensis griseus</name>
    <dbReference type="NCBI Taxonomy" id="10029"/>
    <lineage>
        <taxon>Eukaryota</taxon>
        <taxon>Metazoa</taxon>
        <taxon>Chordata</taxon>
        <taxon>Craniata</taxon>
        <taxon>Vertebrata</taxon>
        <taxon>Euteleostomi</taxon>
        <taxon>Mammalia</taxon>
        <taxon>Eutheria</taxon>
        <taxon>Euarchontoglires</taxon>
        <taxon>Glires</taxon>
        <taxon>Rodentia</taxon>
        <taxon>Myomorpha</taxon>
        <taxon>Muroidea</taxon>
        <taxon>Cricetidae</taxon>
        <taxon>Cricetinae</taxon>
        <taxon>Cricetulus</taxon>
    </lineage>
</organism>
<name>SAR1B_CRIGR</name>